<dbReference type="EMBL" id="BC053103">
    <property type="protein sequence ID" value="AAH53103.1"/>
    <property type="molecule type" value="mRNA"/>
</dbReference>
<dbReference type="EMBL" id="AK172946">
    <property type="protein sequence ID" value="BAD32224.1"/>
    <property type="molecule type" value="mRNA"/>
</dbReference>
<dbReference type="CCDS" id="CCDS21775.1"/>
<dbReference type="RefSeq" id="NP_892040.1">
    <property type="nucleotide sequence ID" value="NM_182995.2"/>
</dbReference>
<dbReference type="SMR" id="Q7TSH4"/>
<dbReference type="BioGRID" id="221690">
    <property type="interactions" value="9"/>
</dbReference>
<dbReference type="CORUM" id="Q7TSH4"/>
<dbReference type="FunCoup" id="Q7TSH4">
    <property type="interactions" value="1362"/>
</dbReference>
<dbReference type="IntAct" id="Q7TSH4">
    <property type="interactions" value="13"/>
</dbReference>
<dbReference type="STRING" id="10090.ENSMUSP00000102167"/>
<dbReference type="GlyGen" id="Q7TSH4">
    <property type="glycosylation" value="2 sites, 2 N-linked glycans (2 sites)"/>
</dbReference>
<dbReference type="iPTMnet" id="Q7TSH4"/>
<dbReference type="PhosphoSitePlus" id="Q7TSH4"/>
<dbReference type="jPOST" id="Q7TSH4"/>
<dbReference type="PaxDb" id="10090-ENSMUSP00000102167"/>
<dbReference type="ProteomicsDB" id="283434"/>
<dbReference type="Pumba" id="Q7TSH4"/>
<dbReference type="Antibodypedia" id="42931">
    <property type="antibodies" value="186 antibodies from 34 providers"/>
</dbReference>
<dbReference type="DNASU" id="101565"/>
<dbReference type="Ensembl" id="ENSMUST00000038650.9">
    <property type="protein sequence ID" value="ENSMUSP00000038881.9"/>
    <property type="gene ID" value="ENSMUSG00000033904.17"/>
</dbReference>
<dbReference type="Ensembl" id="ENSMUST00000106557.8">
    <property type="protein sequence ID" value="ENSMUSP00000102167.2"/>
    <property type="gene ID" value="ENSMUSG00000033904.17"/>
</dbReference>
<dbReference type="GeneID" id="101565"/>
<dbReference type="KEGG" id="mmu:101565"/>
<dbReference type="UCSC" id="uc009jkj.1">
    <property type="organism name" value="mouse"/>
</dbReference>
<dbReference type="AGR" id="MGI:2141942"/>
<dbReference type="CTD" id="9738"/>
<dbReference type="MGI" id="MGI:2141942">
    <property type="gene designation" value="Ccp110"/>
</dbReference>
<dbReference type="VEuPathDB" id="HostDB:ENSMUSG00000033904"/>
<dbReference type="eggNOG" id="ENOG502QUVS">
    <property type="taxonomic scope" value="Eukaryota"/>
</dbReference>
<dbReference type="GeneTree" id="ENSGT00390000004090"/>
<dbReference type="HOGENOM" id="CLU_302049_0_0_1"/>
<dbReference type="InParanoid" id="Q7TSH4"/>
<dbReference type="OMA" id="QFKSNGV"/>
<dbReference type="OrthoDB" id="10028852at2759"/>
<dbReference type="PhylomeDB" id="Q7TSH4"/>
<dbReference type="TreeFam" id="TF332788"/>
<dbReference type="Reactome" id="R-MMU-2565942">
    <property type="pathway name" value="Regulation of PLK1 Activity at G2/M Transition"/>
</dbReference>
<dbReference type="Reactome" id="R-MMU-380259">
    <property type="pathway name" value="Loss of Nlp from mitotic centrosomes"/>
</dbReference>
<dbReference type="Reactome" id="R-MMU-380270">
    <property type="pathway name" value="Recruitment of mitotic centrosome proteins and complexes"/>
</dbReference>
<dbReference type="Reactome" id="R-MMU-380284">
    <property type="pathway name" value="Loss of proteins required for interphase microtubule organization from the centrosome"/>
</dbReference>
<dbReference type="Reactome" id="R-MMU-380320">
    <property type="pathway name" value="Recruitment of NuMA to mitotic centrosomes"/>
</dbReference>
<dbReference type="Reactome" id="R-MMU-5620912">
    <property type="pathway name" value="Anchoring of the basal body to the plasma membrane"/>
</dbReference>
<dbReference type="Reactome" id="R-MMU-5689880">
    <property type="pathway name" value="Ub-specific processing proteases"/>
</dbReference>
<dbReference type="Reactome" id="R-MMU-8854518">
    <property type="pathway name" value="AURKA Activation by TPX2"/>
</dbReference>
<dbReference type="Reactome" id="R-MMU-9013424">
    <property type="pathway name" value="RHOV GTPase cycle"/>
</dbReference>
<dbReference type="BioGRID-ORCS" id="101565">
    <property type="hits" value="1 hit in 77 CRISPR screens"/>
</dbReference>
<dbReference type="ChiTaRS" id="Ccp110">
    <property type="organism name" value="mouse"/>
</dbReference>
<dbReference type="PRO" id="PR:Q7TSH4"/>
<dbReference type="Proteomes" id="UP000000589">
    <property type="component" value="Chromosome 7"/>
</dbReference>
<dbReference type="RNAct" id="Q7TSH4">
    <property type="molecule type" value="protein"/>
</dbReference>
<dbReference type="Bgee" id="ENSMUSG00000033904">
    <property type="expression patterns" value="Expressed in superior cervical ganglion and 218 other cell types or tissues"/>
</dbReference>
<dbReference type="ExpressionAtlas" id="Q7TSH4">
    <property type="expression patterns" value="baseline and differential"/>
</dbReference>
<dbReference type="GO" id="GO:0005814">
    <property type="term" value="C:centriole"/>
    <property type="evidence" value="ECO:0000314"/>
    <property type="project" value="MGI"/>
</dbReference>
<dbReference type="GO" id="GO:0005813">
    <property type="term" value="C:centrosome"/>
    <property type="evidence" value="ECO:0000314"/>
    <property type="project" value="UniProtKB"/>
</dbReference>
<dbReference type="GO" id="GO:0005929">
    <property type="term" value="C:cilium"/>
    <property type="evidence" value="ECO:0007669"/>
    <property type="project" value="UniProtKB-KW"/>
</dbReference>
<dbReference type="GO" id="GO:0005737">
    <property type="term" value="C:cytoplasm"/>
    <property type="evidence" value="ECO:0007669"/>
    <property type="project" value="UniProtKB-KW"/>
</dbReference>
<dbReference type="GO" id="GO:0005815">
    <property type="term" value="C:microtubule organizing center"/>
    <property type="evidence" value="ECO:0000314"/>
    <property type="project" value="MGI"/>
</dbReference>
<dbReference type="GO" id="GO:0032991">
    <property type="term" value="C:protein-containing complex"/>
    <property type="evidence" value="ECO:0000266"/>
    <property type="project" value="MGI"/>
</dbReference>
<dbReference type="GO" id="GO:0007099">
    <property type="term" value="P:centriole replication"/>
    <property type="evidence" value="ECO:0007669"/>
    <property type="project" value="Ensembl"/>
</dbReference>
<dbReference type="GO" id="GO:0051298">
    <property type="term" value="P:centrosome duplication"/>
    <property type="evidence" value="ECO:0000250"/>
    <property type="project" value="UniProtKB"/>
</dbReference>
<dbReference type="GO" id="GO:0032053">
    <property type="term" value="P:ciliary basal body organization"/>
    <property type="evidence" value="ECO:0000315"/>
    <property type="project" value="UniProtKB"/>
</dbReference>
<dbReference type="GO" id="GO:1902018">
    <property type="term" value="P:negative regulation of cilium assembly"/>
    <property type="evidence" value="ECO:0000314"/>
    <property type="project" value="UniProtKB"/>
</dbReference>
<dbReference type="GO" id="GO:0045724">
    <property type="term" value="P:positive regulation of cilium assembly"/>
    <property type="evidence" value="ECO:0000315"/>
    <property type="project" value="UniProtKB"/>
</dbReference>
<dbReference type="GO" id="GO:0032465">
    <property type="term" value="P:regulation of cytokinesis"/>
    <property type="evidence" value="ECO:0007669"/>
    <property type="project" value="Ensembl"/>
</dbReference>
<dbReference type="InterPro" id="IPR033207">
    <property type="entry name" value="CCP110"/>
</dbReference>
<dbReference type="PANTHER" id="PTHR13594">
    <property type="entry name" value="CENTRIOLAR COILED-COIL PROTEIN OF 110 KDA"/>
    <property type="match status" value="1"/>
</dbReference>
<dbReference type="PANTHER" id="PTHR13594:SF1">
    <property type="entry name" value="CENTRIOLAR COILED-COIL PROTEIN OF 110 KDA"/>
    <property type="match status" value="1"/>
</dbReference>
<dbReference type="Pfam" id="PF16025">
    <property type="entry name" value="CaM_bind"/>
    <property type="match status" value="1"/>
</dbReference>
<evidence type="ECO:0000250" key="1">
    <source>
        <dbReference type="UniProtKB" id="O43303"/>
    </source>
</evidence>
<evidence type="ECO:0000255" key="2"/>
<evidence type="ECO:0000256" key="3">
    <source>
        <dbReference type="SAM" id="MobiDB-lite"/>
    </source>
</evidence>
<evidence type="ECO:0000269" key="4">
    <source>
    </source>
</evidence>
<evidence type="ECO:0000269" key="5">
    <source>
    </source>
</evidence>
<evidence type="ECO:0000269" key="6">
    <source>
    </source>
</evidence>
<evidence type="ECO:0000269" key="7">
    <source>
    </source>
</evidence>
<evidence type="ECO:0000269" key="8">
    <source>
    </source>
</evidence>
<evidence type="ECO:0000269" key="9">
    <source>
    </source>
</evidence>
<evidence type="ECO:0007744" key="10">
    <source>
    </source>
</evidence>
<reference key="1">
    <citation type="journal article" date="2004" name="Genome Res.">
        <title>The status, quality, and expansion of the NIH full-length cDNA project: the Mammalian Gene Collection (MGC).</title>
        <authorList>
            <consortium name="The MGC Project Team"/>
        </authorList>
    </citation>
    <scope>NUCLEOTIDE SEQUENCE [LARGE SCALE MRNA]</scope>
    <source>
        <strain>C57BL/6J</strain>
        <tissue>Brain</tissue>
    </source>
</reference>
<reference key="2">
    <citation type="journal article" date="2004" name="DNA Res.">
        <title>Prediction of the coding sequences of mouse homologues of KIAA gene: IV. The complete nucleotide sequences of 500 mouse KIAA-homologous cDNAs identified by screening of terminal sequences of cDNA clones randomly sampled from size-fractionated libraries.</title>
        <authorList>
            <person name="Okazaki N."/>
            <person name="Kikuno R."/>
            <person name="Ohara R."/>
            <person name="Inamoto S."/>
            <person name="Koseki H."/>
            <person name="Hiraoka S."/>
            <person name="Saga Y."/>
            <person name="Seino S."/>
            <person name="Nishimura M."/>
            <person name="Kaisho T."/>
            <person name="Hoshino K."/>
            <person name="Kitamura H."/>
            <person name="Nagase T."/>
            <person name="Ohara O."/>
            <person name="Koga H."/>
        </authorList>
    </citation>
    <scope>NUCLEOTIDE SEQUENCE [LARGE SCALE MRNA] OF 165-959</scope>
    <source>
        <tissue>Embryonic intestine</tissue>
    </source>
</reference>
<reference key="3">
    <citation type="journal article" date="2010" name="Cell">
        <title>A tissue-specific atlas of mouse protein phosphorylation and expression.</title>
        <authorList>
            <person name="Huttlin E.L."/>
            <person name="Jedrychowski M.P."/>
            <person name="Elias J.E."/>
            <person name="Goswami T."/>
            <person name="Rad R."/>
            <person name="Beausoleil S.A."/>
            <person name="Villen J."/>
            <person name="Haas W."/>
            <person name="Sowa M.E."/>
            <person name="Gygi S.P."/>
        </authorList>
    </citation>
    <scope>PHOSPHORYLATION [LARGE SCALE ANALYSIS] AT SER-364 AND SER-398</scope>
    <scope>IDENTIFICATION BY MASS SPECTROMETRY [LARGE SCALE ANALYSIS]</scope>
    <source>
        <tissue>Spleen</tissue>
        <tissue>Testis</tissue>
    </source>
</reference>
<reference key="4">
    <citation type="journal article" date="2012" name="Cell">
        <title>The spinocerebellar ataxia-associated gene tau tubulin kinase 2 controls the initiation of ciliogenesis.</title>
        <authorList>
            <person name="Goetz S.C."/>
            <person name="Liem K.F. Jr."/>
            <person name="Anderson K.V."/>
        </authorList>
    </citation>
    <scope>FUNCTION</scope>
    <scope>SUBCELLULAR LOCATION</scope>
</reference>
<reference key="5">
    <citation type="journal article" date="2014" name="Cell. Mol. Life Sci.">
        <title>The nucleotide-binding proteins Nubp1 and Nubp2 are negative regulators of ciliogenesis.</title>
        <authorList>
            <person name="Kypri E."/>
            <person name="Christodoulou A."/>
            <person name="Maimaris G."/>
            <person name="Lethan M."/>
            <person name="Markaki M."/>
            <person name="Lysandrou C."/>
            <person name="Lederer C.W."/>
            <person name="Tavernarakis N."/>
            <person name="Geimer S."/>
            <person name="Pedersen L.B."/>
            <person name="Santama N."/>
        </authorList>
    </citation>
    <scope>SUBCELLULAR LOCATION</scope>
</reference>
<reference key="6">
    <citation type="journal article" date="2015" name="Curr. Biol.">
        <title>Mother centriole distal appendages mediate centrosome docking at the immunological synapse and reveal mechanistic parallels with ciliogenesis.</title>
        <authorList>
            <person name="Stinchcombe J.C."/>
            <person name="Randzavola L.O."/>
            <person name="Angus K.L."/>
            <person name="Mantell J.M."/>
            <person name="Verkade P."/>
            <person name="Griffiths G.M."/>
        </authorList>
    </citation>
    <scope>SUBCELLULAR LOCATION</scope>
</reference>
<reference key="7">
    <citation type="journal article" date="2016" name="Development">
        <title>Centrosomal protein CP110 controls maturation of mother centriole during cilia biogenesis.</title>
        <authorList>
            <person name="Yadav S.P."/>
            <person name="Sharma N.K."/>
            <person name="Liu C."/>
            <person name="Dong L."/>
            <person name="Li T."/>
            <person name="Swaroop A."/>
        </authorList>
    </citation>
    <scope>DISRUPTION PHENOTYPE</scope>
    <scope>FUNCTION</scope>
</reference>
<reference key="8">
    <citation type="journal article" date="2018" name="Nat. Commun.">
        <title>M-Phase Phosphoprotein 9 regulates ciliogenesis by modulating CP110-CEP97 complex localization at the mother centriole.</title>
        <authorList>
            <person name="Huang N."/>
            <person name="Zhang D."/>
            <person name="Li F."/>
            <person name="Chai P."/>
            <person name="Wang S."/>
            <person name="Teng J."/>
            <person name="Chen J."/>
        </authorList>
    </citation>
    <scope>SUBCELLULAR LOCATION</scope>
</reference>
<reference key="9">
    <citation type="journal article" date="2022" name="EMBO Rep.">
        <title>ENKD1 promotes CP110 removal through competing with CEP97 to initiate ciliogenesis.</title>
        <authorList>
            <person name="Song T."/>
            <person name="Yang Y."/>
            <person name="Zhou P."/>
            <person name="Ran J."/>
            <person name="Zhang L."/>
            <person name="Wu X."/>
            <person name="Xie W."/>
            <person name="Zhong T."/>
            <person name="Liu H."/>
            <person name="Liu M."/>
            <person name="Li D."/>
            <person name="Zhao H."/>
            <person name="Zhou J."/>
        </authorList>
    </citation>
    <scope>INTERACTION WITH CEP97 AND ENKD1</scope>
</reference>
<comment type="function">
    <text evidence="1 4 7">Necessary for centrosome duplication at different stages of procentriole formation. Acts as a key negative regulator of ciliogenesis in collaboration with CEP97 by capping the mother centriole thereby preventing cilia formation (PubMed:23141541). Also involved in promoting ciliogenesis. May play a role in the assembly of the mother centriole subdistal appendages (SDA) thereby effecting the fusion of recycling endosomes to basal bodies during cilia formation (PubMed:26965371). Required for correct spindle formation and has a role in regulating cytokinesis and genome stability via cooperation with CALM1 and CETN2 (By similarity).</text>
</comment>
<comment type="subunit">
    <text evidence="1 9">Interacts with CALM1, CETN2, CEP76, CEP104, CEP290 and TALPID3 (By similarity). Interacts with CEP97 (PubMed:35301795). Seems to associate with discrete CETN2, CEP97 and CEP290-containing complexes (By similarity). Interacts with NEURL4 and CCNF; these interactions are not mutually exclusive and both lead to CCP110 ubiquitination and proteasome-dependent degradation (By similarity). Via its interaction with NEURL4, may indirectly interact with HERC2 (By similarity). Interacts with KIF24, leading to its recruitment to centrioles (By similarity). Interacts with USP20 and USP33 (By similarity). Interacts with MPHOSPH9 (By similarity). Interacts (via N-terminal region) with ENKD1 (via central region); ENKD1 competes with CEP97 for binding to CCP110, destabilizing the interaction between CP110 and CEP97 which promotes the removal of CCP110 and CEP97 from the mother centriole and allows the initiation of ciliogenesis (PubMed:35301795).</text>
</comment>
<comment type="interaction">
    <interactant intactId="EBI-646843">
        <id>Q7TSH4</id>
    </interactant>
    <interactant intactId="EBI-397460">
        <id>P62204</id>
        <label>Calm3</label>
    </interactant>
    <organismsDiffer>false</organismsDiffer>
    <experiments>4</experiments>
</comment>
<comment type="interaction">
    <interactant intactId="EBI-646843">
        <id>Q7TSH4</id>
    </interactant>
    <interactant intactId="EBI-1811999">
        <id>Q6A078</id>
        <label>Cep290</label>
    </interactant>
    <organismsDiffer>false</organismsDiffer>
    <experiments>3</experiments>
</comment>
<comment type="subcellular location">
    <subcellularLocation>
        <location evidence="1">Cytoplasm</location>
        <location evidence="1">Cytoskeleton</location>
        <location evidence="1">Microtubule organizing center</location>
        <location evidence="1">Centrosome</location>
        <location evidence="1">Centriole</location>
    </subcellularLocation>
    <subcellularLocation>
        <location evidence="5 8">Cytoplasm</location>
        <location evidence="5 8">Cytoskeleton</location>
        <location evidence="5 8">Microtubule organizing center</location>
        <location evidence="5 8">Centrosome</location>
    </subcellularLocation>
    <subcellularLocation>
        <location evidence="5">Cytoplasm</location>
        <location evidence="5">Cytoskeleton</location>
        <location evidence="5">Cilium basal body</location>
    </subcellularLocation>
    <text evidence="1 4 6">Recruited early and then associates with the growing distal tips (PubMed:23141541). Recruited to the mother centriole by KIF24 (By similarity). Removed from centrioles by TTBK2, leading to initiation of ciliogenesis and localizes only to the daughter centriole in ciliated cells (PubMed:23141541). In cytotoxic T lymphocytes remains associated with the mother centriole during docking of the centrosome at the immunological synapse upon target contact (PubMed:26670998). Recruited at the distal end of the mother centriole by MPHOSPH9 (By similarity).</text>
</comment>
<comment type="PTM">
    <text evidence="1">Phosphorylated by CDKs.</text>
</comment>
<comment type="PTM">
    <text evidence="1">Ubiquitinated by the SCF(CCNF) during G2 phase, leading to its degradation by the proteasome and preventing centrosome reduplication. Deubiquitinated by USP33 in S and G2/M phase, leading to stabilize CCP110 during the period which centrioles duplicate and elongate. Ubiquitinated by the EDVP complex, leading to its degradation.</text>
</comment>
<comment type="disruption phenotype">
    <text evidence="7">Lethal within a few hours after birth with multiple defects in organogenesis. Mice show an early block in cilia formation and a phenotype reminiscent of human short rib-polydactyly syndrome.</text>
</comment>
<gene>
    <name type="primary">Ccp110</name>
    <name type="synonym">Cep110</name>
    <name type="synonym">Cp110</name>
    <name type="synonym">Kiaa0419</name>
</gene>
<proteinExistence type="evidence at protein level"/>
<feature type="chain" id="PRO_0000089461" description="Centriolar coiled-coil protein of 110 kDa">
    <location>
        <begin position="1"/>
        <end position="1004"/>
    </location>
</feature>
<feature type="region of interest" description="CEP97 binding" evidence="1">
    <location>
        <begin position="1"/>
        <end position="221"/>
    </location>
</feature>
<feature type="region of interest" description="Calmodulin-binding" evidence="1">
    <location>
        <begin position="64"/>
        <end position="82"/>
    </location>
</feature>
<feature type="region of interest" description="Required for interaction with CEP290" evidence="1">
    <location>
        <begin position="67"/>
        <end position="82"/>
    </location>
</feature>
<feature type="region of interest" description="Disordered" evidence="3">
    <location>
        <begin position="147"/>
        <end position="194"/>
    </location>
</feature>
<feature type="region of interest" description="Disordered" evidence="3">
    <location>
        <begin position="239"/>
        <end position="279"/>
    </location>
</feature>
<feature type="region of interest" description="Interaction with CEP76" evidence="1">
    <location>
        <begin position="349"/>
        <end position="564"/>
    </location>
</feature>
<feature type="region of interest" description="Disordered" evidence="3">
    <location>
        <begin position="401"/>
        <end position="433"/>
    </location>
</feature>
<feature type="region of interest" description="Calmodulin-binding" evidence="1">
    <location>
        <begin position="773"/>
        <end position="813"/>
    </location>
</feature>
<feature type="region of interest" description="Calmodulin-binding" evidence="1">
    <location>
        <begin position="901"/>
        <end position="916"/>
    </location>
</feature>
<feature type="region of interest" description="Disordered" evidence="3">
    <location>
        <begin position="955"/>
        <end position="1004"/>
    </location>
</feature>
<feature type="coiled-coil region" evidence="2">
    <location>
        <begin position="51"/>
        <end position="90"/>
    </location>
</feature>
<feature type="coiled-coil region" evidence="2">
    <location>
        <begin position="641"/>
        <end position="699"/>
    </location>
</feature>
<feature type="compositionally biased region" description="Low complexity" evidence="3">
    <location>
        <begin position="243"/>
        <end position="252"/>
    </location>
</feature>
<feature type="compositionally biased region" description="Basic and acidic residues" evidence="3">
    <location>
        <begin position="253"/>
        <end position="276"/>
    </location>
</feature>
<feature type="compositionally biased region" description="Polar residues" evidence="3">
    <location>
        <begin position="415"/>
        <end position="433"/>
    </location>
</feature>
<feature type="compositionally biased region" description="Polar residues" evidence="3">
    <location>
        <begin position="970"/>
        <end position="980"/>
    </location>
</feature>
<feature type="compositionally biased region" description="Basic residues" evidence="3">
    <location>
        <begin position="994"/>
        <end position="1004"/>
    </location>
</feature>
<feature type="modified residue" description="Phosphoserine" evidence="1">
    <location>
        <position position="170"/>
    </location>
</feature>
<feature type="modified residue" description="Phosphoserine" evidence="10">
    <location>
        <position position="364"/>
    </location>
</feature>
<feature type="modified residue" description="Phosphoserine" evidence="1">
    <location>
        <position position="370"/>
    </location>
</feature>
<feature type="modified residue" description="Phosphoserine" evidence="10">
    <location>
        <position position="398"/>
    </location>
</feature>
<feature type="modified residue" description="Phosphoserine" evidence="1">
    <location>
        <position position="550"/>
    </location>
</feature>
<protein>
    <recommendedName>
        <fullName>Centriolar coiled-coil protein of 110 kDa</fullName>
    </recommendedName>
    <alternativeName>
        <fullName>Centrosomal protein of 110 kDa</fullName>
        <shortName>Cep110</shortName>
        <shortName>Cp110</shortName>
    </alternativeName>
</protein>
<name>CP110_MOUSE</name>
<accession>Q7TSH4</accession>
<accession>Q6A072</accession>
<sequence>MEEYEEFCEKALGRAQEASLSTGSFLPAQAESVSLIRFHGVAVLSPLLTIEKRKKIQEEKQKALDVQSRKQANRKKALLTRVQEILENVQVRKAPNASDFDQWATETIYSNPEVTDLNVPVRVPNSLPSPTEHCTSVKLEKITGLLPVNNEDQQTPKRVGLPGDSEVSGSLRQCESPESRQAEDGAALRLSSASPQETIISDVLGKEEQDPSCLAEVTPDPYIMSLQNLMKRSKEYVERELSSRSLRNSLKRSVNETHSDRENDAAKASDCVKEKAPPMPIGRHCGSAIPDKPSLNKSNVLLQGASQASSMGTAGLASFSKIDLPAGAAPPAAPDAGSDFTVIPTFVTENKVKSLKGPYAKLPSPEPSMSPTMHRRHSRSASACQILINNPVNACELSPKGKEEAVDRTAPAAAETTNESETVPKSPTDLTGVCSSNVSATKITSESTREMVVGKPSQRQQALGAHLGNNVTVERSAMEGPFIADDRGAQKVDGTCMAVPKLHELQPSSQCVSSQTLEDVCELKSASLLAKNSCNLQMELNKSYDVKHPSPLLTQTQTSRQQMDTPPVFRGNEQFVDNSFEKVKRRLDLDVDSLQKENCPYIITAGVAEQERDRLLERRYPKGFVHINKNKMLETSPKEGQELLKSKMLAFEEMRKRLEEQHAQQLSLLIAEQEREQEQLQKEIEEQEKMLKEKAVTTDVSDLNSALEWRQRTDSALLETMLSQVDSLQTSNNSGFITSALQYSFGSAGEAPFYLWGSLTSGVTRVSGTRPCGRAQAKWSQVFNPEIHAKFNKITAVAKGFLTRKLMQTDKLKQLRQTVKDTMEFIRSFQSEAPLKRGVVSAQDASLQERVLAQLRAALYGIHDIFFVMDAAERMSILHHDREARKEKLLRQMDKMKSPRVALSVATQKSLDRKKFMKVAEMGMPNKKFLLKQNPSETRVLQPNQGQNAPVHRLLSRQGTPKTSVKGVVQNRQKPSQSRVPNRAPVSGAYAGKTQRKRPNVATI</sequence>
<organism>
    <name type="scientific">Mus musculus</name>
    <name type="common">Mouse</name>
    <dbReference type="NCBI Taxonomy" id="10090"/>
    <lineage>
        <taxon>Eukaryota</taxon>
        <taxon>Metazoa</taxon>
        <taxon>Chordata</taxon>
        <taxon>Craniata</taxon>
        <taxon>Vertebrata</taxon>
        <taxon>Euteleostomi</taxon>
        <taxon>Mammalia</taxon>
        <taxon>Eutheria</taxon>
        <taxon>Euarchontoglires</taxon>
        <taxon>Glires</taxon>
        <taxon>Rodentia</taxon>
        <taxon>Myomorpha</taxon>
        <taxon>Muroidea</taxon>
        <taxon>Muridae</taxon>
        <taxon>Murinae</taxon>
        <taxon>Mus</taxon>
        <taxon>Mus</taxon>
    </lineage>
</organism>
<keyword id="KW-0966">Cell projection</keyword>
<keyword id="KW-0969">Cilium</keyword>
<keyword id="KW-0970">Cilium biogenesis/degradation</keyword>
<keyword id="KW-0175">Coiled coil</keyword>
<keyword id="KW-0963">Cytoplasm</keyword>
<keyword id="KW-0206">Cytoskeleton</keyword>
<keyword id="KW-0597">Phosphoprotein</keyword>
<keyword id="KW-1185">Reference proteome</keyword>
<keyword id="KW-0832">Ubl conjugation</keyword>